<gene>
    <name type="ordered locus">ECU01_0240</name>
</gene>
<proteinExistence type="evidence at protein level"/>
<reference key="1">
    <citation type="journal article" date="2001" name="Genome Res.">
        <title>Sequence and analysis of chromosome I of the amitochondriate intracellular parasite Encephalitozoon cuniculi (Microspora).</title>
        <authorList>
            <person name="Peyret P."/>
            <person name="Katinka M.D."/>
            <person name="Duprat S."/>
            <person name="Duffieux F."/>
            <person name="Barbe V."/>
            <person name="Barbazanges M."/>
            <person name="Weissenbach J."/>
            <person name="Saurin W."/>
            <person name="Vivares C.P."/>
        </authorList>
    </citation>
    <scope>NUCLEOTIDE SEQUENCE [LARGE SCALE GENOMIC DNA]</scope>
    <source>
        <strain>GB-M1</strain>
    </source>
</reference>
<reference key="2">
    <citation type="journal article" date="2001" name="Nature">
        <title>Genome sequence and gene compaction of the eukaryote parasite Encephalitozoon cuniculi.</title>
        <authorList>
            <person name="Katinka M.D."/>
            <person name="Duprat S."/>
            <person name="Cornillot E."/>
            <person name="Metenier G."/>
            <person name="Thomarat F."/>
            <person name="Prensier G."/>
            <person name="Barbe V."/>
            <person name="Peyretaillade E."/>
            <person name="Brottier P."/>
            <person name="Wincker P."/>
            <person name="Delbac F."/>
            <person name="El Alaoui H."/>
            <person name="Peyret P."/>
            <person name="Saurin W."/>
            <person name="Gouy M."/>
            <person name="Weissenbach J."/>
            <person name="Vivares C.P."/>
        </authorList>
    </citation>
    <scope>NUCLEOTIDE SEQUENCE [LARGE SCALE GENOMIC DNA]</scope>
    <source>
        <strain>GB-M1</strain>
    </source>
</reference>
<reference key="3">
    <citation type="journal article" date="2006" name="Proteomics">
        <title>Proteomic analysis of the eukaryotic parasite Encephalitozoon cuniculi (microsporidia): a reference map for proteins expressed in late sporogonial stages.</title>
        <authorList>
            <person name="Brosson D."/>
            <person name="Kuhn L."/>
            <person name="Delbac F."/>
            <person name="Garin J."/>
            <person name="Vivares C.P."/>
            <person name="Texier C."/>
        </authorList>
    </citation>
    <scope>IDENTIFICATION BY MASS SPECTROMETRY [LARGE SCALE ANALYSIS]</scope>
    <scope>DEVELOPMENTAL STAGE</scope>
</reference>
<organism>
    <name type="scientific">Encephalitozoon cuniculi (strain GB-M1)</name>
    <name type="common">Microsporidian parasite</name>
    <dbReference type="NCBI Taxonomy" id="284813"/>
    <lineage>
        <taxon>Eukaryota</taxon>
        <taxon>Fungi</taxon>
        <taxon>Fungi incertae sedis</taxon>
        <taxon>Microsporidia</taxon>
        <taxon>Unikaryonidae</taxon>
        <taxon>Encephalitozoon</taxon>
    </lineage>
</organism>
<comment type="catalytic activity">
    <reaction>
        <text>beta-D-fructose 1,6-bisphosphate = D-glyceraldehyde 3-phosphate + dihydroxyacetone phosphate</text>
        <dbReference type="Rhea" id="RHEA:14729"/>
        <dbReference type="ChEBI" id="CHEBI:32966"/>
        <dbReference type="ChEBI" id="CHEBI:57642"/>
        <dbReference type="ChEBI" id="CHEBI:59776"/>
        <dbReference type="EC" id="4.1.2.13"/>
    </reaction>
</comment>
<comment type="pathway">
    <text>Carbohydrate degradation; glycolysis; D-glyceraldehyde 3-phosphate and glycerone phosphate from D-glucose: step 4/4.</text>
</comment>
<comment type="developmental stage">
    <text evidence="2">Expressed in late sporogonial stages.</text>
</comment>
<comment type="similarity">
    <text evidence="3">Belongs to the class I fructose-bisphosphate aldolase family.</text>
</comment>
<sequence length="338" mass="37917">MMDCDHLLRLGMTAKKILENGKGILAADETPKTLGRRFEKLGITNTEENRRKFREILFSTKGIERYIGGVILNQETFEQTSGSGVPLTELLKKKGIEIGIKLDKGLIDYKEKEKISVGLEDLDLRCKSSAFKDATFAKWRSLFYFYDGIPSEDCINENCSILAKYAIICQKNGLVPIVEPEVFLEGDYSMKRSYEVTRQILSTLMKYLNYELVYIPGVLIKASYVTSGQLSNEKYTPKKVATFTLRALLSTIPCGIPGIVFLSGGHGSEDAIGFLNAINMERGCRTWSLSFSFARALTDGVLETWRGDDSNIEEAQKILLETSFKACRGAEGKLWDQE</sequence>
<keyword id="KW-0002">3D-structure</keyword>
<keyword id="KW-0324">Glycolysis</keyword>
<keyword id="KW-0456">Lyase</keyword>
<keyword id="KW-1185">Reference proteome</keyword>
<keyword id="KW-0704">Schiff base</keyword>
<protein>
    <recommendedName>
        <fullName>Fructose-bisphosphate aldolase</fullName>
        <ecNumber>4.1.2.13</ecNumber>
    </recommendedName>
</protein>
<accession>Q8SSM8</accession>
<feature type="chain" id="PRO_0000381751" description="Fructose-bisphosphate aldolase">
    <location>
        <begin position="1"/>
        <end position="338"/>
    </location>
</feature>
<feature type="active site" description="Proton acceptor" evidence="1">
    <location>
        <position position="179"/>
    </location>
</feature>
<feature type="active site" description="Schiff-base intermediate with dihydroxyacetone-P" evidence="1">
    <location>
        <position position="221"/>
    </location>
</feature>
<feature type="binding site" evidence="1">
    <location>
        <position position="50"/>
    </location>
    <ligand>
        <name>substrate</name>
    </ligand>
</feature>
<feature type="binding site" evidence="1">
    <location>
        <position position="138"/>
    </location>
    <ligand>
        <name>substrate</name>
    </ligand>
</feature>
<feature type="helix" evidence="4">
    <location>
        <begin position="4"/>
        <end position="18"/>
    </location>
</feature>
<feature type="helix" evidence="4">
    <location>
        <begin position="19"/>
        <end position="21"/>
    </location>
</feature>
<feature type="strand" evidence="4">
    <location>
        <begin position="23"/>
        <end position="27"/>
    </location>
</feature>
<feature type="helix" evidence="4">
    <location>
        <begin position="31"/>
        <end position="40"/>
    </location>
</feature>
<feature type="helix" evidence="4">
    <location>
        <begin position="47"/>
        <end position="58"/>
    </location>
</feature>
<feature type="helix" evidence="4">
    <location>
        <begin position="63"/>
        <end position="65"/>
    </location>
</feature>
<feature type="strand" evidence="4">
    <location>
        <begin position="67"/>
        <end position="72"/>
    </location>
</feature>
<feature type="helix" evidence="4">
    <location>
        <begin position="74"/>
        <end position="78"/>
    </location>
</feature>
<feature type="helix" evidence="4">
    <location>
        <begin position="87"/>
        <end position="93"/>
    </location>
</feature>
<feature type="strand" evidence="4">
    <location>
        <begin position="97"/>
        <end position="101"/>
    </location>
</feature>
<feature type="strand" evidence="4">
    <location>
        <begin position="106"/>
        <end position="109"/>
    </location>
</feature>
<feature type="turn" evidence="4">
    <location>
        <begin position="110"/>
        <end position="112"/>
    </location>
</feature>
<feature type="strand" evidence="4">
    <location>
        <begin position="113"/>
        <end position="116"/>
    </location>
</feature>
<feature type="helix" evidence="4">
    <location>
        <begin position="119"/>
        <end position="121"/>
    </location>
</feature>
<feature type="helix" evidence="4">
    <location>
        <begin position="122"/>
        <end position="126"/>
    </location>
</feature>
<feature type="helix" evidence="4">
    <location>
        <begin position="129"/>
        <end position="131"/>
    </location>
</feature>
<feature type="strand" evidence="4">
    <location>
        <begin position="136"/>
        <end position="143"/>
    </location>
</feature>
<feature type="helix" evidence="4">
    <location>
        <begin position="152"/>
        <end position="171"/>
    </location>
</feature>
<feature type="strand" evidence="4">
    <location>
        <begin position="175"/>
        <end position="182"/>
    </location>
</feature>
<feature type="strand" evidence="4">
    <location>
        <begin position="184"/>
        <end position="186"/>
    </location>
</feature>
<feature type="helix" evidence="4">
    <location>
        <begin position="190"/>
        <end position="210"/>
    </location>
</feature>
<feature type="helix" evidence="4">
    <location>
        <begin position="215"/>
        <end position="217"/>
    </location>
</feature>
<feature type="strand" evidence="4">
    <location>
        <begin position="219"/>
        <end position="222"/>
    </location>
</feature>
<feature type="helix" evidence="4">
    <location>
        <begin position="237"/>
        <end position="251"/>
    </location>
</feature>
<feature type="strand" evidence="4">
    <location>
        <begin position="258"/>
        <end position="261"/>
    </location>
</feature>
<feature type="helix" evidence="4">
    <location>
        <begin position="268"/>
        <end position="280"/>
    </location>
</feature>
<feature type="strand" evidence="4">
    <location>
        <begin position="286"/>
        <end position="294"/>
    </location>
</feature>
<feature type="helix" evidence="4">
    <location>
        <begin position="295"/>
        <end position="305"/>
    </location>
</feature>
<feature type="helix" evidence="4">
    <location>
        <begin position="309"/>
        <end position="311"/>
    </location>
</feature>
<feature type="helix" evidence="4">
    <location>
        <begin position="312"/>
        <end position="330"/>
    </location>
</feature>
<name>ALF_ENCCU</name>
<evidence type="ECO:0000250" key="1"/>
<evidence type="ECO:0000269" key="2">
    <source>
    </source>
</evidence>
<evidence type="ECO:0000305" key="3"/>
<evidence type="ECO:0007829" key="4">
    <source>
        <dbReference type="PDB" id="3MBD"/>
    </source>
</evidence>
<dbReference type="EC" id="4.1.2.13"/>
<dbReference type="EMBL" id="AL391737">
    <property type="protein sequence ID" value="CAD24894.1"/>
    <property type="molecule type" value="Genomic_DNA"/>
</dbReference>
<dbReference type="RefSeq" id="NP_001402110.1">
    <property type="nucleotide sequence ID" value="NM_001415502.1"/>
</dbReference>
<dbReference type="RefSeq" id="XP_965859.1">
    <property type="nucleotide sequence ID" value="XM_960766.1"/>
</dbReference>
<dbReference type="PDB" id="3MBD">
    <property type="method" value="X-ray"/>
    <property type="resolution" value="2.00 A"/>
    <property type="chains" value="A=1-338"/>
</dbReference>
<dbReference type="PDB" id="3MBF">
    <property type="method" value="X-ray"/>
    <property type="resolution" value="2.37 A"/>
    <property type="chains" value="A=1-338"/>
</dbReference>
<dbReference type="PDB" id="3QRH">
    <property type="method" value="X-ray"/>
    <property type="resolution" value="2.00 A"/>
    <property type="chains" value="A=1-338"/>
</dbReference>
<dbReference type="PDBsum" id="3MBD"/>
<dbReference type="PDBsum" id="3MBF"/>
<dbReference type="PDBsum" id="3QRH"/>
<dbReference type="SMR" id="Q8SSM8"/>
<dbReference type="STRING" id="284813.Q8SSM8"/>
<dbReference type="GeneID" id="860198"/>
<dbReference type="VEuPathDB" id="MicrosporidiaDB:ECU01_0240"/>
<dbReference type="HOGENOM" id="CLU_031243_0_0_1"/>
<dbReference type="InParanoid" id="Q8SSM8"/>
<dbReference type="OMA" id="WRAVITI"/>
<dbReference type="OrthoDB" id="36455at2759"/>
<dbReference type="BRENDA" id="4.1.2.13">
    <property type="organism ID" value="7412"/>
</dbReference>
<dbReference type="UniPathway" id="UPA00109">
    <property type="reaction ID" value="UER00183"/>
</dbReference>
<dbReference type="EvolutionaryTrace" id="Q8SSM8"/>
<dbReference type="Proteomes" id="UP000000819">
    <property type="component" value="Chromosome I"/>
</dbReference>
<dbReference type="GO" id="GO:0004332">
    <property type="term" value="F:fructose-bisphosphate aldolase activity"/>
    <property type="evidence" value="ECO:0007669"/>
    <property type="project" value="UniProtKB-EC"/>
</dbReference>
<dbReference type="GO" id="GO:0006096">
    <property type="term" value="P:glycolytic process"/>
    <property type="evidence" value="ECO:0007669"/>
    <property type="project" value="UniProtKB-UniPathway"/>
</dbReference>
<dbReference type="Gene3D" id="3.20.20.70">
    <property type="entry name" value="Aldolase class I"/>
    <property type="match status" value="1"/>
</dbReference>
<dbReference type="InterPro" id="IPR013785">
    <property type="entry name" value="Aldolase_TIM"/>
</dbReference>
<dbReference type="InterPro" id="IPR000741">
    <property type="entry name" value="FBA_I"/>
</dbReference>
<dbReference type="NCBIfam" id="NF033379">
    <property type="entry name" value="FrucBisAld_I"/>
    <property type="match status" value="1"/>
</dbReference>
<dbReference type="PANTHER" id="PTHR11627">
    <property type="entry name" value="FRUCTOSE-BISPHOSPHATE ALDOLASE"/>
    <property type="match status" value="1"/>
</dbReference>
<dbReference type="Pfam" id="PF00274">
    <property type="entry name" value="Glycolytic"/>
    <property type="match status" value="1"/>
</dbReference>
<dbReference type="SUPFAM" id="SSF51569">
    <property type="entry name" value="Aldolase"/>
    <property type="match status" value="1"/>
</dbReference>